<sequence length="49" mass="5908">MRVNITLACTECGERNYITSKNKRNNPERLELKKYCPRDRKVTLHRETK</sequence>
<evidence type="ECO:0000255" key="1">
    <source>
        <dbReference type="HAMAP-Rule" id="MF_00294"/>
    </source>
</evidence>
<reference key="1">
    <citation type="journal article" date="2004" name="Nucleic Acids Res.">
        <title>Thermoadaptation trait revealed by the genome sequence of thermophilic Geobacillus kaustophilus.</title>
        <authorList>
            <person name="Takami H."/>
            <person name="Takaki Y."/>
            <person name="Chee G.-J."/>
            <person name="Nishi S."/>
            <person name="Shimamura S."/>
            <person name="Suzuki H."/>
            <person name="Matsui S."/>
            <person name="Uchiyama I."/>
        </authorList>
    </citation>
    <scope>NUCLEOTIDE SEQUENCE [LARGE SCALE GENOMIC DNA]</scope>
    <source>
        <strain>HTA426</strain>
    </source>
</reference>
<accession>Q5KX51</accession>
<proteinExistence type="inferred from homology"/>
<comment type="similarity">
    <text evidence="1">Belongs to the bacterial ribosomal protein bL33 family.</text>
</comment>
<name>RL332_GEOKA</name>
<gene>
    <name evidence="1" type="primary">rpmG2</name>
    <name type="ordered locus">GK2450</name>
</gene>
<dbReference type="EMBL" id="BA000043">
    <property type="protein sequence ID" value="BAD76735.1"/>
    <property type="molecule type" value="Genomic_DNA"/>
</dbReference>
<dbReference type="SMR" id="Q5KX51"/>
<dbReference type="STRING" id="235909.GK2450"/>
<dbReference type="KEGG" id="gka:GK2450"/>
<dbReference type="eggNOG" id="COG0267">
    <property type="taxonomic scope" value="Bacteria"/>
</dbReference>
<dbReference type="HOGENOM" id="CLU_190949_0_2_9"/>
<dbReference type="Proteomes" id="UP000001172">
    <property type="component" value="Chromosome"/>
</dbReference>
<dbReference type="GO" id="GO:0005737">
    <property type="term" value="C:cytoplasm"/>
    <property type="evidence" value="ECO:0007669"/>
    <property type="project" value="UniProtKB-ARBA"/>
</dbReference>
<dbReference type="GO" id="GO:1990904">
    <property type="term" value="C:ribonucleoprotein complex"/>
    <property type="evidence" value="ECO:0007669"/>
    <property type="project" value="UniProtKB-KW"/>
</dbReference>
<dbReference type="GO" id="GO:0005840">
    <property type="term" value="C:ribosome"/>
    <property type="evidence" value="ECO:0007669"/>
    <property type="project" value="UniProtKB-KW"/>
</dbReference>
<dbReference type="GO" id="GO:0003735">
    <property type="term" value="F:structural constituent of ribosome"/>
    <property type="evidence" value="ECO:0007669"/>
    <property type="project" value="InterPro"/>
</dbReference>
<dbReference type="GO" id="GO:0006412">
    <property type="term" value="P:translation"/>
    <property type="evidence" value="ECO:0007669"/>
    <property type="project" value="UniProtKB-UniRule"/>
</dbReference>
<dbReference type="Gene3D" id="2.20.28.120">
    <property type="entry name" value="Ribosomal protein L33"/>
    <property type="match status" value="1"/>
</dbReference>
<dbReference type="HAMAP" id="MF_00294">
    <property type="entry name" value="Ribosomal_bL33"/>
    <property type="match status" value="1"/>
</dbReference>
<dbReference type="InterPro" id="IPR001705">
    <property type="entry name" value="Ribosomal_bL33"/>
</dbReference>
<dbReference type="InterPro" id="IPR018264">
    <property type="entry name" value="Ribosomal_bL33_CS"/>
</dbReference>
<dbReference type="InterPro" id="IPR038584">
    <property type="entry name" value="Ribosomal_bL33_sf"/>
</dbReference>
<dbReference type="InterPro" id="IPR011332">
    <property type="entry name" value="Ribosomal_zn-bd"/>
</dbReference>
<dbReference type="NCBIfam" id="NF001764">
    <property type="entry name" value="PRK00504.1"/>
    <property type="match status" value="1"/>
</dbReference>
<dbReference type="NCBIfam" id="NF001860">
    <property type="entry name" value="PRK00595.1"/>
    <property type="match status" value="1"/>
</dbReference>
<dbReference type="NCBIfam" id="TIGR01023">
    <property type="entry name" value="rpmG_bact"/>
    <property type="match status" value="1"/>
</dbReference>
<dbReference type="PANTHER" id="PTHR43168">
    <property type="entry name" value="50S RIBOSOMAL PROTEIN L33, CHLOROPLASTIC"/>
    <property type="match status" value="1"/>
</dbReference>
<dbReference type="PANTHER" id="PTHR43168:SF2">
    <property type="entry name" value="LARGE RIBOSOMAL SUBUNIT PROTEIN BL33C"/>
    <property type="match status" value="1"/>
</dbReference>
<dbReference type="Pfam" id="PF00471">
    <property type="entry name" value="Ribosomal_L33"/>
    <property type="match status" value="1"/>
</dbReference>
<dbReference type="SUPFAM" id="SSF57829">
    <property type="entry name" value="Zn-binding ribosomal proteins"/>
    <property type="match status" value="1"/>
</dbReference>
<dbReference type="PROSITE" id="PS00582">
    <property type="entry name" value="RIBOSOMAL_L33"/>
    <property type="match status" value="1"/>
</dbReference>
<feature type="chain" id="PRO_0000356470" description="Large ribosomal subunit protein bL33B">
    <location>
        <begin position="1"/>
        <end position="49"/>
    </location>
</feature>
<protein>
    <recommendedName>
        <fullName evidence="1">Large ribosomal subunit protein bL33B</fullName>
    </recommendedName>
    <alternativeName>
        <fullName evidence="1">50S ribosomal protein L33 2</fullName>
    </alternativeName>
</protein>
<organism>
    <name type="scientific">Geobacillus kaustophilus (strain HTA426)</name>
    <dbReference type="NCBI Taxonomy" id="235909"/>
    <lineage>
        <taxon>Bacteria</taxon>
        <taxon>Bacillati</taxon>
        <taxon>Bacillota</taxon>
        <taxon>Bacilli</taxon>
        <taxon>Bacillales</taxon>
        <taxon>Anoxybacillaceae</taxon>
        <taxon>Geobacillus</taxon>
        <taxon>Geobacillus thermoleovorans group</taxon>
    </lineage>
</organism>
<keyword id="KW-1185">Reference proteome</keyword>
<keyword id="KW-0687">Ribonucleoprotein</keyword>
<keyword id="KW-0689">Ribosomal protein</keyword>